<protein>
    <recommendedName>
        <fullName evidence="1">Succinyl-diaminopimelate desuccinylase</fullName>
        <shortName evidence="1">SDAP desuccinylase</shortName>
        <ecNumber evidence="1">3.5.1.18</ecNumber>
    </recommendedName>
    <alternativeName>
        <fullName evidence="1">N-succinyl-LL-2,6-diaminoheptanedioate amidohydrolase</fullName>
    </alternativeName>
</protein>
<keyword id="KW-0028">Amino-acid biosynthesis</keyword>
<keyword id="KW-0170">Cobalt</keyword>
<keyword id="KW-0220">Diaminopimelate biosynthesis</keyword>
<keyword id="KW-0378">Hydrolase</keyword>
<keyword id="KW-0457">Lysine biosynthesis</keyword>
<keyword id="KW-0479">Metal-binding</keyword>
<keyword id="KW-1185">Reference proteome</keyword>
<keyword id="KW-0862">Zinc</keyword>
<proteinExistence type="inferred from homology"/>
<organism>
    <name type="scientific">Acidovorax ebreus (strain TPSY)</name>
    <name type="common">Diaphorobacter sp. (strain TPSY)</name>
    <dbReference type="NCBI Taxonomy" id="535289"/>
    <lineage>
        <taxon>Bacteria</taxon>
        <taxon>Pseudomonadati</taxon>
        <taxon>Pseudomonadota</taxon>
        <taxon>Betaproteobacteria</taxon>
        <taxon>Burkholderiales</taxon>
        <taxon>Comamonadaceae</taxon>
        <taxon>Diaphorobacter</taxon>
    </lineage>
</organism>
<accession>B9MJL1</accession>
<evidence type="ECO:0000255" key="1">
    <source>
        <dbReference type="HAMAP-Rule" id="MF_01690"/>
    </source>
</evidence>
<sequence length="391" mass="42215">MSPTLLLTEQLIAHPSVTPDDAGCLDLLARRLAPLGFACERLDSGPENFRVSNLWSKRTAARSGQAQAATKTVVFAGHTDVVPTGPVEQWSSPPFTPTHRDGRLYGRGASDMKASIAAFVVAVEEFLAATPDPRLDIALLLTSDEEGPSVDGTKVVIEQLRARGERLDWCIVGEPTSVEQTGDMIKNGRRGTLSGRLTVRGVQGHIAYPQLARNPIHQAVPALTELAATVWDEGNAFFPPTSWQMSNIHGGTGATNVIPGQVVIDFNFRFSTESTAEGLQQRVHAVLDRHGLEYDLTWTLGGQPFLTTPGELVQAVQQAIRAETGLETELSTTGGTSDGRFIAQICPQVIELGPPNASIHKIDENVRLVDIEPLKNIYRRTLDHLNALAGA</sequence>
<dbReference type="EC" id="3.5.1.18" evidence="1"/>
<dbReference type="EMBL" id="CP001392">
    <property type="protein sequence ID" value="ACM33349.1"/>
    <property type="molecule type" value="Genomic_DNA"/>
</dbReference>
<dbReference type="RefSeq" id="WP_015913413.1">
    <property type="nucleotide sequence ID" value="NC_011992.1"/>
</dbReference>
<dbReference type="SMR" id="B9MJL1"/>
<dbReference type="KEGG" id="dia:Dtpsy_1892"/>
<dbReference type="eggNOG" id="COG0624">
    <property type="taxonomic scope" value="Bacteria"/>
</dbReference>
<dbReference type="HOGENOM" id="CLU_021802_4_0_4"/>
<dbReference type="UniPathway" id="UPA00034">
    <property type="reaction ID" value="UER00021"/>
</dbReference>
<dbReference type="Proteomes" id="UP000000450">
    <property type="component" value="Chromosome"/>
</dbReference>
<dbReference type="GO" id="GO:0008777">
    <property type="term" value="F:acetylornithine deacetylase activity"/>
    <property type="evidence" value="ECO:0007669"/>
    <property type="project" value="TreeGrafter"/>
</dbReference>
<dbReference type="GO" id="GO:0050897">
    <property type="term" value="F:cobalt ion binding"/>
    <property type="evidence" value="ECO:0007669"/>
    <property type="project" value="UniProtKB-UniRule"/>
</dbReference>
<dbReference type="GO" id="GO:0009014">
    <property type="term" value="F:succinyl-diaminopimelate desuccinylase activity"/>
    <property type="evidence" value="ECO:0007669"/>
    <property type="project" value="UniProtKB-UniRule"/>
</dbReference>
<dbReference type="GO" id="GO:0008270">
    <property type="term" value="F:zinc ion binding"/>
    <property type="evidence" value="ECO:0007669"/>
    <property type="project" value="UniProtKB-UniRule"/>
</dbReference>
<dbReference type="GO" id="GO:0019877">
    <property type="term" value="P:diaminopimelate biosynthetic process"/>
    <property type="evidence" value="ECO:0007669"/>
    <property type="project" value="UniProtKB-UniRule"/>
</dbReference>
<dbReference type="GO" id="GO:0006526">
    <property type="term" value="P:L-arginine biosynthetic process"/>
    <property type="evidence" value="ECO:0007669"/>
    <property type="project" value="TreeGrafter"/>
</dbReference>
<dbReference type="GO" id="GO:0009089">
    <property type="term" value="P:lysine biosynthetic process via diaminopimelate"/>
    <property type="evidence" value="ECO:0007669"/>
    <property type="project" value="UniProtKB-UniRule"/>
</dbReference>
<dbReference type="CDD" id="cd03891">
    <property type="entry name" value="M20_DapE_proteobac"/>
    <property type="match status" value="1"/>
</dbReference>
<dbReference type="FunFam" id="3.30.70.360:FF:000011">
    <property type="entry name" value="Succinyl-diaminopimelate desuccinylase"/>
    <property type="match status" value="1"/>
</dbReference>
<dbReference type="Gene3D" id="3.40.630.10">
    <property type="entry name" value="Zn peptidases"/>
    <property type="match status" value="2"/>
</dbReference>
<dbReference type="HAMAP" id="MF_01690">
    <property type="entry name" value="DapE"/>
    <property type="match status" value="1"/>
</dbReference>
<dbReference type="InterPro" id="IPR001261">
    <property type="entry name" value="ArgE/DapE_CS"/>
</dbReference>
<dbReference type="InterPro" id="IPR036264">
    <property type="entry name" value="Bact_exopeptidase_dim_dom"/>
</dbReference>
<dbReference type="InterPro" id="IPR005941">
    <property type="entry name" value="DapE_proteobac"/>
</dbReference>
<dbReference type="InterPro" id="IPR002933">
    <property type="entry name" value="Peptidase_M20"/>
</dbReference>
<dbReference type="InterPro" id="IPR011650">
    <property type="entry name" value="Peptidase_M20_dimer"/>
</dbReference>
<dbReference type="InterPro" id="IPR050072">
    <property type="entry name" value="Peptidase_M20A"/>
</dbReference>
<dbReference type="NCBIfam" id="TIGR01246">
    <property type="entry name" value="dapE_proteo"/>
    <property type="match status" value="1"/>
</dbReference>
<dbReference type="NCBIfam" id="NF009557">
    <property type="entry name" value="PRK13009.1"/>
    <property type="match status" value="1"/>
</dbReference>
<dbReference type="PANTHER" id="PTHR43808">
    <property type="entry name" value="ACETYLORNITHINE DEACETYLASE"/>
    <property type="match status" value="1"/>
</dbReference>
<dbReference type="PANTHER" id="PTHR43808:SF31">
    <property type="entry name" value="N-ACETYL-L-CITRULLINE DEACETYLASE"/>
    <property type="match status" value="1"/>
</dbReference>
<dbReference type="Pfam" id="PF07687">
    <property type="entry name" value="M20_dimer"/>
    <property type="match status" value="1"/>
</dbReference>
<dbReference type="Pfam" id="PF01546">
    <property type="entry name" value="Peptidase_M20"/>
    <property type="match status" value="1"/>
</dbReference>
<dbReference type="SUPFAM" id="SSF55031">
    <property type="entry name" value="Bacterial exopeptidase dimerisation domain"/>
    <property type="match status" value="1"/>
</dbReference>
<dbReference type="SUPFAM" id="SSF53187">
    <property type="entry name" value="Zn-dependent exopeptidases"/>
    <property type="match status" value="1"/>
</dbReference>
<dbReference type="PROSITE" id="PS00759">
    <property type="entry name" value="ARGE_DAPE_CPG2_2"/>
    <property type="match status" value="1"/>
</dbReference>
<reference key="1">
    <citation type="submission" date="2009-01" db="EMBL/GenBank/DDBJ databases">
        <title>Complete sequence of Diaphorobacter sp. TPSY.</title>
        <authorList>
            <consortium name="US DOE Joint Genome Institute"/>
            <person name="Lucas S."/>
            <person name="Copeland A."/>
            <person name="Lapidus A."/>
            <person name="Glavina del Rio T."/>
            <person name="Tice H."/>
            <person name="Bruce D."/>
            <person name="Goodwin L."/>
            <person name="Pitluck S."/>
            <person name="Chertkov O."/>
            <person name="Brettin T."/>
            <person name="Detter J.C."/>
            <person name="Han C."/>
            <person name="Larimer F."/>
            <person name="Land M."/>
            <person name="Hauser L."/>
            <person name="Kyrpides N."/>
            <person name="Mikhailova N."/>
            <person name="Coates J.D."/>
        </authorList>
    </citation>
    <scope>NUCLEOTIDE SEQUENCE [LARGE SCALE GENOMIC DNA]</scope>
    <source>
        <strain>TPSY</strain>
    </source>
</reference>
<gene>
    <name evidence="1" type="primary">dapE</name>
    <name type="ordered locus">Dtpsy_1892</name>
</gene>
<comment type="function">
    <text evidence="1">Catalyzes the hydrolysis of N-succinyl-L,L-diaminopimelic acid (SDAP), forming succinate and LL-2,6-diaminopimelate (DAP), an intermediate involved in the bacterial biosynthesis of lysine and meso-diaminopimelic acid, an essential component of bacterial cell walls.</text>
</comment>
<comment type="catalytic activity">
    <reaction evidence="1">
        <text>N-succinyl-(2S,6S)-2,6-diaminopimelate + H2O = (2S,6S)-2,6-diaminopimelate + succinate</text>
        <dbReference type="Rhea" id="RHEA:22608"/>
        <dbReference type="ChEBI" id="CHEBI:15377"/>
        <dbReference type="ChEBI" id="CHEBI:30031"/>
        <dbReference type="ChEBI" id="CHEBI:57609"/>
        <dbReference type="ChEBI" id="CHEBI:58087"/>
        <dbReference type="EC" id="3.5.1.18"/>
    </reaction>
</comment>
<comment type="cofactor">
    <cofactor evidence="1">
        <name>Zn(2+)</name>
        <dbReference type="ChEBI" id="CHEBI:29105"/>
    </cofactor>
    <cofactor evidence="1">
        <name>Co(2+)</name>
        <dbReference type="ChEBI" id="CHEBI:48828"/>
    </cofactor>
    <text evidence="1">Binds 2 Zn(2+) or Co(2+) ions per subunit.</text>
</comment>
<comment type="pathway">
    <text evidence="1">Amino-acid biosynthesis; L-lysine biosynthesis via DAP pathway; LL-2,6-diaminopimelate from (S)-tetrahydrodipicolinate (succinylase route): step 3/3.</text>
</comment>
<comment type="subunit">
    <text evidence="1">Homodimer.</text>
</comment>
<comment type="similarity">
    <text evidence="1">Belongs to the peptidase M20A family. DapE subfamily.</text>
</comment>
<feature type="chain" id="PRO_0000375542" description="Succinyl-diaminopimelate desuccinylase">
    <location>
        <begin position="1"/>
        <end position="391"/>
    </location>
</feature>
<feature type="active site" evidence="1">
    <location>
        <position position="80"/>
    </location>
</feature>
<feature type="active site" description="Proton acceptor" evidence="1">
    <location>
        <position position="145"/>
    </location>
</feature>
<feature type="binding site" evidence="1">
    <location>
        <position position="78"/>
    </location>
    <ligand>
        <name>Zn(2+)</name>
        <dbReference type="ChEBI" id="CHEBI:29105"/>
        <label>1</label>
    </ligand>
</feature>
<feature type="binding site" evidence="1">
    <location>
        <position position="111"/>
    </location>
    <ligand>
        <name>Zn(2+)</name>
        <dbReference type="ChEBI" id="CHEBI:29105"/>
        <label>1</label>
    </ligand>
</feature>
<feature type="binding site" evidence="1">
    <location>
        <position position="111"/>
    </location>
    <ligand>
        <name>Zn(2+)</name>
        <dbReference type="ChEBI" id="CHEBI:29105"/>
        <label>2</label>
    </ligand>
</feature>
<feature type="binding site" evidence="1">
    <location>
        <position position="146"/>
    </location>
    <ligand>
        <name>Zn(2+)</name>
        <dbReference type="ChEBI" id="CHEBI:29105"/>
        <label>2</label>
    </ligand>
</feature>
<feature type="binding site" evidence="1">
    <location>
        <position position="174"/>
    </location>
    <ligand>
        <name>Zn(2+)</name>
        <dbReference type="ChEBI" id="CHEBI:29105"/>
        <label>1</label>
    </ligand>
</feature>
<feature type="binding site" evidence="1">
    <location>
        <position position="360"/>
    </location>
    <ligand>
        <name>Zn(2+)</name>
        <dbReference type="ChEBI" id="CHEBI:29105"/>
        <label>2</label>
    </ligand>
</feature>
<name>DAPE_ACIET</name>